<sequence>MSSWKDSLTSIPGTVAQLINESASNLLHASSTLGSTVGLGGSGSTGSGSEAGGSEESGPQGAEYRALPIPASLVREQWRLIFTSDANIQDLQAAIAHCRDLVLLSEELSEERRWLVRHLVDLRYSLQELEEAQEQHSLSSDMVVMNAIRAVVGHHFVPHHPHHGKRNRLQAAAKRNYCDHCTTIIWSVVQNSYVCSDCGFLVHQKCIDGVKRVCAHVLVSERQHPISEICPEIGLASQGYKCAECGTMLNIKNTWIEPRLCDYSGLYYCPRCNWNDSNFIPARIIHNWDFSPRRVSRTALQEIRLFLNKPLIRLEEDNPKLFVFVEKLCAVKKLRQNLVHMRHYLAACKIASELKLVDQQLGVRRHLAQSNEFYSLSDLSQVESGALSEFLQGVFKAFNDHIRSCPMCLAQAYICEICSNNEVIFPFDDGCIKCDQCNSIFHRVCLTRKNMICPKCIRIQERRLQLDRMKSTEDDDDDDDGVATDDDVTAAE</sequence>
<protein>
    <recommendedName>
        <fullName evidence="3">Differentially expressed in FDCP 8 homolog</fullName>
    </recommendedName>
</protein>
<proteinExistence type="evidence at transcript level"/>
<feature type="chain" id="PRO_0000321920" description="Differentially expressed in FDCP 8 homolog">
    <location>
        <begin position="1"/>
        <end position="492"/>
    </location>
</feature>
<feature type="zinc finger region" description="Phorbol-ester/DAG-type 1" evidence="1">
    <location>
        <begin position="161"/>
        <end position="214"/>
    </location>
</feature>
<feature type="zinc finger region" description="Phorbol-ester/DAG-type 2" evidence="1">
    <location>
        <begin position="400"/>
        <end position="453"/>
    </location>
</feature>
<feature type="region of interest" description="Disordered" evidence="2">
    <location>
        <begin position="38"/>
        <end position="62"/>
    </location>
</feature>
<feature type="region of interest" description="Disordered" evidence="2">
    <location>
        <begin position="468"/>
        <end position="492"/>
    </location>
</feature>
<feature type="compositionally biased region" description="Gly residues" evidence="2">
    <location>
        <begin position="38"/>
        <end position="51"/>
    </location>
</feature>
<feature type="compositionally biased region" description="Acidic residues" evidence="2">
    <location>
        <begin position="473"/>
        <end position="492"/>
    </location>
</feature>
<evidence type="ECO:0000255" key="1">
    <source>
        <dbReference type="PROSITE-ProRule" id="PRU00226"/>
    </source>
</evidence>
<evidence type="ECO:0000256" key="2">
    <source>
        <dbReference type="SAM" id="MobiDB-lite"/>
    </source>
</evidence>
<evidence type="ECO:0000305" key="3"/>
<evidence type="ECO:0000312" key="4">
    <source>
        <dbReference type="FlyBase" id="FBgn0046296"/>
    </source>
</evidence>
<keyword id="KW-0479">Metal-binding</keyword>
<keyword id="KW-1185">Reference proteome</keyword>
<keyword id="KW-0677">Repeat</keyword>
<keyword id="KW-0862">Zinc</keyword>
<keyword id="KW-0863">Zinc-finger</keyword>
<organism>
    <name type="scientific">Drosophila melanogaster</name>
    <name type="common">Fruit fly</name>
    <dbReference type="NCBI Taxonomy" id="7227"/>
    <lineage>
        <taxon>Eukaryota</taxon>
        <taxon>Metazoa</taxon>
        <taxon>Ecdysozoa</taxon>
        <taxon>Arthropoda</taxon>
        <taxon>Hexapoda</taxon>
        <taxon>Insecta</taxon>
        <taxon>Pterygota</taxon>
        <taxon>Neoptera</taxon>
        <taxon>Endopterygota</taxon>
        <taxon>Diptera</taxon>
        <taxon>Brachycera</taxon>
        <taxon>Muscomorpha</taxon>
        <taxon>Ephydroidea</taxon>
        <taxon>Drosophilidae</taxon>
        <taxon>Drosophila</taxon>
        <taxon>Sophophora</taxon>
    </lineage>
</organism>
<dbReference type="EMBL" id="AE014296">
    <property type="protein sequence ID" value="AAF49957.1"/>
    <property type="molecule type" value="Genomic_DNA"/>
</dbReference>
<dbReference type="EMBL" id="AY058352">
    <property type="protein sequence ID" value="AAL13581.1"/>
    <property type="molecule type" value="mRNA"/>
</dbReference>
<dbReference type="RefSeq" id="NP_648549.1">
    <property type="nucleotide sequence ID" value="NM_140292.3"/>
</dbReference>
<dbReference type="SMR" id="Q9VTT9"/>
<dbReference type="BioGRID" id="64736">
    <property type="interactions" value="18"/>
</dbReference>
<dbReference type="FunCoup" id="Q9VTT9">
    <property type="interactions" value="20"/>
</dbReference>
<dbReference type="IntAct" id="Q9VTT9">
    <property type="interactions" value="13"/>
</dbReference>
<dbReference type="STRING" id="7227.FBpp0075727"/>
<dbReference type="PaxDb" id="7227-FBpp0075727"/>
<dbReference type="DNASU" id="39381"/>
<dbReference type="EnsemblMetazoa" id="FBtr0075995">
    <property type="protein sequence ID" value="FBpp0075727"/>
    <property type="gene ID" value="FBgn0046296"/>
</dbReference>
<dbReference type="GeneID" id="39381"/>
<dbReference type="KEGG" id="dme:Dmel_CG11534"/>
<dbReference type="UCSC" id="CG11534-RA">
    <property type="organism name" value="d. melanogaster"/>
</dbReference>
<dbReference type="AGR" id="FB:FBgn0046296"/>
<dbReference type="CTD" id="54849"/>
<dbReference type="FlyBase" id="FBgn0046296">
    <property type="gene designation" value="DEF8"/>
</dbReference>
<dbReference type="VEuPathDB" id="VectorBase:FBgn0046296"/>
<dbReference type="eggNOG" id="KOG1829">
    <property type="taxonomic scope" value="Eukaryota"/>
</dbReference>
<dbReference type="GeneTree" id="ENSGT00940000159182"/>
<dbReference type="HOGENOM" id="CLU_034500_4_0_1"/>
<dbReference type="InParanoid" id="Q9VTT9"/>
<dbReference type="OMA" id="NMICPKC"/>
<dbReference type="OrthoDB" id="1918044at2759"/>
<dbReference type="PhylomeDB" id="Q9VTT9"/>
<dbReference type="SignaLink" id="Q9VTT9"/>
<dbReference type="BioGRID-ORCS" id="39381">
    <property type="hits" value="0 hits in 1 CRISPR screen"/>
</dbReference>
<dbReference type="ChiTaRS" id="CG11534">
    <property type="organism name" value="fly"/>
</dbReference>
<dbReference type="GenomeRNAi" id="39381"/>
<dbReference type="PRO" id="PR:Q9VTT9"/>
<dbReference type="Proteomes" id="UP000000803">
    <property type="component" value="Chromosome 3L"/>
</dbReference>
<dbReference type="Bgee" id="FBgn0046296">
    <property type="expression patterns" value="Expressed in embryonic/larval hemocyte (Drosophila) and 42 other cell types or tissues"/>
</dbReference>
<dbReference type="GO" id="GO:0008270">
    <property type="term" value="F:zinc ion binding"/>
    <property type="evidence" value="ECO:0007669"/>
    <property type="project" value="UniProtKB-KW"/>
</dbReference>
<dbReference type="CDD" id="cd20819">
    <property type="entry name" value="C1_DEF8"/>
    <property type="match status" value="1"/>
</dbReference>
<dbReference type="Gene3D" id="3.30.60.20">
    <property type="match status" value="1"/>
</dbReference>
<dbReference type="InterPro" id="IPR046349">
    <property type="entry name" value="C1-like_sf"/>
</dbReference>
<dbReference type="InterPro" id="IPR051366">
    <property type="entry name" value="DEF8"/>
</dbReference>
<dbReference type="InterPro" id="IPR047983">
    <property type="entry name" value="DEF8_C1"/>
</dbReference>
<dbReference type="InterPro" id="IPR002219">
    <property type="entry name" value="PE/DAG-bd"/>
</dbReference>
<dbReference type="InterPro" id="IPR025258">
    <property type="entry name" value="RH_dom"/>
</dbReference>
<dbReference type="PANTHER" id="PTHR12326:SF3">
    <property type="entry name" value="DIFFERENTIALLY EXPRESSED IN FDCP 8 HOMOLOG"/>
    <property type="match status" value="1"/>
</dbReference>
<dbReference type="PANTHER" id="PTHR12326">
    <property type="entry name" value="PLECKSTRIN HOMOLOGY DOMAIN CONTAINING PROTEIN"/>
    <property type="match status" value="1"/>
</dbReference>
<dbReference type="Pfam" id="PF00130">
    <property type="entry name" value="C1_1"/>
    <property type="match status" value="1"/>
</dbReference>
<dbReference type="Pfam" id="PF13901">
    <property type="entry name" value="RH_dom"/>
    <property type="match status" value="1"/>
</dbReference>
<dbReference type="SMART" id="SM00109">
    <property type="entry name" value="C1"/>
    <property type="match status" value="1"/>
</dbReference>
<dbReference type="SMART" id="SM01175">
    <property type="entry name" value="DUF4206"/>
    <property type="match status" value="1"/>
</dbReference>
<dbReference type="SUPFAM" id="SSF57889">
    <property type="entry name" value="Cysteine-rich domain"/>
    <property type="match status" value="1"/>
</dbReference>
<dbReference type="PROSITE" id="PS50081">
    <property type="entry name" value="ZF_DAG_PE_2"/>
    <property type="match status" value="1"/>
</dbReference>
<gene>
    <name evidence="4" type="primary">DEF8</name>
    <name evidence="4" type="ORF">CG11534</name>
</gene>
<name>DEFI8_DROME</name>
<comment type="similarity">
    <text evidence="3">Belongs to the DEF8 family.</text>
</comment>
<accession>Q9VTT9</accession>
<reference key="1">
    <citation type="journal article" date="2000" name="Science">
        <title>The genome sequence of Drosophila melanogaster.</title>
        <authorList>
            <person name="Adams M.D."/>
            <person name="Celniker S.E."/>
            <person name="Holt R.A."/>
            <person name="Evans C.A."/>
            <person name="Gocayne J.D."/>
            <person name="Amanatides P.G."/>
            <person name="Scherer S.E."/>
            <person name="Li P.W."/>
            <person name="Hoskins R.A."/>
            <person name="Galle R.F."/>
            <person name="George R.A."/>
            <person name="Lewis S.E."/>
            <person name="Richards S."/>
            <person name="Ashburner M."/>
            <person name="Henderson S.N."/>
            <person name="Sutton G.G."/>
            <person name="Wortman J.R."/>
            <person name="Yandell M.D."/>
            <person name="Zhang Q."/>
            <person name="Chen L.X."/>
            <person name="Brandon R.C."/>
            <person name="Rogers Y.-H.C."/>
            <person name="Blazej R.G."/>
            <person name="Champe M."/>
            <person name="Pfeiffer B.D."/>
            <person name="Wan K.H."/>
            <person name="Doyle C."/>
            <person name="Baxter E.G."/>
            <person name="Helt G."/>
            <person name="Nelson C.R."/>
            <person name="Miklos G.L.G."/>
            <person name="Abril J.F."/>
            <person name="Agbayani A."/>
            <person name="An H.-J."/>
            <person name="Andrews-Pfannkoch C."/>
            <person name="Baldwin D."/>
            <person name="Ballew R.M."/>
            <person name="Basu A."/>
            <person name="Baxendale J."/>
            <person name="Bayraktaroglu L."/>
            <person name="Beasley E.M."/>
            <person name="Beeson K.Y."/>
            <person name="Benos P.V."/>
            <person name="Berman B.P."/>
            <person name="Bhandari D."/>
            <person name="Bolshakov S."/>
            <person name="Borkova D."/>
            <person name="Botchan M.R."/>
            <person name="Bouck J."/>
            <person name="Brokstein P."/>
            <person name="Brottier P."/>
            <person name="Burtis K.C."/>
            <person name="Busam D.A."/>
            <person name="Butler H."/>
            <person name="Cadieu E."/>
            <person name="Center A."/>
            <person name="Chandra I."/>
            <person name="Cherry J.M."/>
            <person name="Cawley S."/>
            <person name="Dahlke C."/>
            <person name="Davenport L.B."/>
            <person name="Davies P."/>
            <person name="de Pablos B."/>
            <person name="Delcher A."/>
            <person name="Deng Z."/>
            <person name="Mays A.D."/>
            <person name="Dew I."/>
            <person name="Dietz S.M."/>
            <person name="Dodson K."/>
            <person name="Doup L.E."/>
            <person name="Downes M."/>
            <person name="Dugan-Rocha S."/>
            <person name="Dunkov B.C."/>
            <person name="Dunn P."/>
            <person name="Durbin K.J."/>
            <person name="Evangelista C.C."/>
            <person name="Ferraz C."/>
            <person name="Ferriera S."/>
            <person name="Fleischmann W."/>
            <person name="Fosler C."/>
            <person name="Gabrielian A.E."/>
            <person name="Garg N.S."/>
            <person name="Gelbart W.M."/>
            <person name="Glasser K."/>
            <person name="Glodek A."/>
            <person name="Gong F."/>
            <person name="Gorrell J.H."/>
            <person name="Gu Z."/>
            <person name="Guan P."/>
            <person name="Harris M."/>
            <person name="Harris N.L."/>
            <person name="Harvey D.A."/>
            <person name="Heiman T.J."/>
            <person name="Hernandez J.R."/>
            <person name="Houck J."/>
            <person name="Hostin D."/>
            <person name="Houston K.A."/>
            <person name="Howland T.J."/>
            <person name="Wei M.-H."/>
            <person name="Ibegwam C."/>
            <person name="Jalali M."/>
            <person name="Kalush F."/>
            <person name="Karpen G.H."/>
            <person name="Ke Z."/>
            <person name="Kennison J.A."/>
            <person name="Ketchum K.A."/>
            <person name="Kimmel B.E."/>
            <person name="Kodira C.D."/>
            <person name="Kraft C.L."/>
            <person name="Kravitz S."/>
            <person name="Kulp D."/>
            <person name="Lai Z."/>
            <person name="Lasko P."/>
            <person name="Lei Y."/>
            <person name="Levitsky A.A."/>
            <person name="Li J.H."/>
            <person name="Li Z."/>
            <person name="Liang Y."/>
            <person name="Lin X."/>
            <person name="Liu X."/>
            <person name="Mattei B."/>
            <person name="McIntosh T.C."/>
            <person name="McLeod M.P."/>
            <person name="McPherson D."/>
            <person name="Merkulov G."/>
            <person name="Milshina N.V."/>
            <person name="Mobarry C."/>
            <person name="Morris J."/>
            <person name="Moshrefi A."/>
            <person name="Mount S.M."/>
            <person name="Moy M."/>
            <person name="Murphy B."/>
            <person name="Murphy L."/>
            <person name="Muzny D.M."/>
            <person name="Nelson D.L."/>
            <person name="Nelson D.R."/>
            <person name="Nelson K.A."/>
            <person name="Nixon K."/>
            <person name="Nusskern D.R."/>
            <person name="Pacleb J.M."/>
            <person name="Palazzolo M."/>
            <person name="Pittman G.S."/>
            <person name="Pan S."/>
            <person name="Pollard J."/>
            <person name="Puri V."/>
            <person name="Reese M.G."/>
            <person name="Reinert K."/>
            <person name="Remington K."/>
            <person name="Saunders R.D.C."/>
            <person name="Scheeler F."/>
            <person name="Shen H."/>
            <person name="Shue B.C."/>
            <person name="Siden-Kiamos I."/>
            <person name="Simpson M."/>
            <person name="Skupski M.P."/>
            <person name="Smith T.J."/>
            <person name="Spier E."/>
            <person name="Spradling A.C."/>
            <person name="Stapleton M."/>
            <person name="Strong R."/>
            <person name="Sun E."/>
            <person name="Svirskas R."/>
            <person name="Tector C."/>
            <person name="Turner R."/>
            <person name="Venter E."/>
            <person name="Wang A.H."/>
            <person name="Wang X."/>
            <person name="Wang Z.-Y."/>
            <person name="Wassarman D.A."/>
            <person name="Weinstock G.M."/>
            <person name="Weissenbach J."/>
            <person name="Williams S.M."/>
            <person name="Woodage T."/>
            <person name="Worley K.C."/>
            <person name="Wu D."/>
            <person name="Yang S."/>
            <person name="Yao Q.A."/>
            <person name="Ye J."/>
            <person name="Yeh R.-F."/>
            <person name="Zaveri J.S."/>
            <person name="Zhan M."/>
            <person name="Zhang G."/>
            <person name="Zhao Q."/>
            <person name="Zheng L."/>
            <person name="Zheng X.H."/>
            <person name="Zhong F.N."/>
            <person name="Zhong W."/>
            <person name="Zhou X."/>
            <person name="Zhu S.C."/>
            <person name="Zhu X."/>
            <person name="Smith H.O."/>
            <person name="Gibbs R.A."/>
            <person name="Myers E.W."/>
            <person name="Rubin G.M."/>
            <person name="Venter J.C."/>
        </authorList>
    </citation>
    <scope>NUCLEOTIDE SEQUENCE [LARGE SCALE GENOMIC DNA]</scope>
    <source>
        <strain>Berkeley</strain>
    </source>
</reference>
<reference key="2">
    <citation type="journal article" date="2002" name="Genome Biol.">
        <title>Annotation of the Drosophila melanogaster euchromatic genome: a systematic review.</title>
        <authorList>
            <person name="Misra S."/>
            <person name="Crosby M.A."/>
            <person name="Mungall C.J."/>
            <person name="Matthews B.B."/>
            <person name="Campbell K.S."/>
            <person name="Hradecky P."/>
            <person name="Huang Y."/>
            <person name="Kaminker J.S."/>
            <person name="Millburn G.H."/>
            <person name="Prochnik S.E."/>
            <person name="Smith C.D."/>
            <person name="Tupy J.L."/>
            <person name="Whitfield E.J."/>
            <person name="Bayraktaroglu L."/>
            <person name="Berman B.P."/>
            <person name="Bettencourt B.R."/>
            <person name="Celniker S.E."/>
            <person name="de Grey A.D.N.J."/>
            <person name="Drysdale R.A."/>
            <person name="Harris N.L."/>
            <person name="Richter J."/>
            <person name="Russo S."/>
            <person name="Schroeder A.J."/>
            <person name="Shu S.Q."/>
            <person name="Stapleton M."/>
            <person name="Yamada C."/>
            <person name="Ashburner M."/>
            <person name="Gelbart W.M."/>
            <person name="Rubin G.M."/>
            <person name="Lewis S.E."/>
        </authorList>
    </citation>
    <scope>GENOME REANNOTATION</scope>
    <source>
        <strain>Berkeley</strain>
    </source>
</reference>
<reference key="3">
    <citation type="journal article" date="2002" name="Genome Biol.">
        <title>A Drosophila full-length cDNA resource.</title>
        <authorList>
            <person name="Stapleton M."/>
            <person name="Carlson J.W."/>
            <person name="Brokstein P."/>
            <person name="Yu C."/>
            <person name="Champe M."/>
            <person name="George R.A."/>
            <person name="Guarin H."/>
            <person name="Kronmiller B."/>
            <person name="Pacleb J.M."/>
            <person name="Park S."/>
            <person name="Wan K.H."/>
            <person name="Rubin G.M."/>
            <person name="Celniker S.E."/>
        </authorList>
    </citation>
    <scope>NUCLEOTIDE SEQUENCE [LARGE SCALE MRNA]</scope>
    <source>
        <strain>Berkeley</strain>
        <tissue>Head</tissue>
    </source>
</reference>